<name>PLSY_PARP8</name>
<evidence type="ECO:0000255" key="1">
    <source>
        <dbReference type="HAMAP-Rule" id="MF_01043"/>
    </source>
</evidence>
<keyword id="KW-0997">Cell inner membrane</keyword>
<keyword id="KW-1003">Cell membrane</keyword>
<keyword id="KW-0444">Lipid biosynthesis</keyword>
<keyword id="KW-0443">Lipid metabolism</keyword>
<keyword id="KW-0472">Membrane</keyword>
<keyword id="KW-0594">Phospholipid biosynthesis</keyword>
<keyword id="KW-1208">Phospholipid metabolism</keyword>
<keyword id="KW-1185">Reference proteome</keyword>
<keyword id="KW-0808">Transferase</keyword>
<keyword id="KW-0812">Transmembrane</keyword>
<keyword id="KW-1133">Transmembrane helix</keyword>
<feature type="chain" id="PRO_1000136071" description="Glycerol-3-phosphate acyltransferase">
    <location>
        <begin position="1"/>
        <end position="210"/>
    </location>
</feature>
<feature type="transmembrane region" description="Helical" evidence="1">
    <location>
        <begin position="4"/>
        <end position="24"/>
    </location>
</feature>
<feature type="transmembrane region" description="Helical" evidence="1">
    <location>
        <begin position="52"/>
        <end position="72"/>
    </location>
</feature>
<feature type="transmembrane region" description="Helical" evidence="1">
    <location>
        <begin position="82"/>
        <end position="102"/>
    </location>
</feature>
<feature type="transmembrane region" description="Helical" evidence="1">
    <location>
        <begin position="118"/>
        <end position="138"/>
    </location>
</feature>
<feature type="transmembrane region" description="Helical" evidence="1">
    <location>
        <begin position="159"/>
        <end position="179"/>
    </location>
</feature>
<gene>
    <name evidence="1" type="primary">plsY</name>
    <name type="ordered locus">Bphy_0526</name>
</gene>
<proteinExistence type="inferred from homology"/>
<comment type="function">
    <text evidence="1">Catalyzes the transfer of an acyl group from acyl-phosphate (acyl-PO(4)) to glycerol-3-phosphate (G3P) to form lysophosphatidic acid (LPA). This enzyme utilizes acyl-phosphate as fatty acyl donor, but not acyl-CoA or acyl-ACP.</text>
</comment>
<comment type="catalytic activity">
    <reaction evidence="1">
        <text>an acyl phosphate + sn-glycerol 3-phosphate = a 1-acyl-sn-glycero-3-phosphate + phosphate</text>
        <dbReference type="Rhea" id="RHEA:34075"/>
        <dbReference type="ChEBI" id="CHEBI:43474"/>
        <dbReference type="ChEBI" id="CHEBI:57597"/>
        <dbReference type="ChEBI" id="CHEBI:57970"/>
        <dbReference type="ChEBI" id="CHEBI:59918"/>
        <dbReference type="EC" id="2.3.1.275"/>
    </reaction>
</comment>
<comment type="pathway">
    <text evidence="1">Lipid metabolism; phospholipid metabolism.</text>
</comment>
<comment type="subunit">
    <text evidence="1">Probably interacts with PlsX.</text>
</comment>
<comment type="subcellular location">
    <subcellularLocation>
        <location evidence="1">Cell inner membrane</location>
        <topology evidence="1">Multi-pass membrane protein</topology>
    </subcellularLocation>
</comment>
<comment type="similarity">
    <text evidence="1">Belongs to the PlsY family.</text>
</comment>
<organism>
    <name type="scientific">Paraburkholderia phymatum (strain DSM 17167 / CIP 108236 / LMG 21445 / STM815)</name>
    <name type="common">Burkholderia phymatum</name>
    <dbReference type="NCBI Taxonomy" id="391038"/>
    <lineage>
        <taxon>Bacteria</taxon>
        <taxon>Pseudomonadati</taxon>
        <taxon>Pseudomonadota</taxon>
        <taxon>Betaproteobacteria</taxon>
        <taxon>Burkholderiales</taxon>
        <taxon>Burkholderiaceae</taxon>
        <taxon>Paraburkholderia</taxon>
    </lineage>
</organism>
<accession>B2JDU2</accession>
<sequence>MENLIVAVVAYLIGSVSFAVIVSAAMGLADPRSYGSKNPGATNVLRSGNKKAAILTLIGDAFKGWLAVWLTGHFSAHFGLDDTSVAIAAIAVFLGHLYPVFFRFKGGKGVATAAGVLLAINPILGIATLLTWLIVAFFTRYSSLAALCAAIFAPLFDGFLFGANVIALSIVAMSALLIWRHRANIAKLVAGQESRIGDKKKAEAAASHKH</sequence>
<dbReference type="EC" id="2.3.1.275" evidence="1"/>
<dbReference type="EMBL" id="CP001043">
    <property type="protein sequence ID" value="ACC69718.1"/>
    <property type="molecule type" value="Genomic_DNA"/>
</dbReference>
<dbReference type="RefSeq" id="WP_012399943.1">
    <property type="nucleotide sequence ID" value="NC_010622.1"/>
</dbReference>
<dbReference type="SMR" id="B2JDU2"/>
<dbReference type="STRING" id="391038.Bphy_0526"/>
<dbReference type="KEGG" id="bph:Bphy_0526"/>
<dbReference type="eggNOG" id="COG0344">
    <property type="taxonomic scope" value="Bacteria"/>
</dbReference>
<dbReference type="HOGENOM" id="CLU_081254_0_0_4"/>
<dbReference type="OrthoDB" id="9777124at2"/>
<dbReference type="UniPathway" id="UPA00085"/>
<dbReference type="Proteomes" id="UP000001192">
    <property type="component" value="Chromosome 1"/>
</dbReference>
<dbReference type="GO" id="GO:0005886">
    <property type="term" value="C:plasma membrane"/>
    <property type="evidence" value="ECO:0007669"/>
    <property type="project" value="UniProtKB-SubCell"/>
</dbReference>
<dbReference type="GO" id="GO:0043772">
    <property type="term" value="F:acyl-phosphate glycerol-3-phosphate acyltransferase activity"/>
    <property type="evidence" value="ECO:0007669"/>
    <property type="project" value="UniProtKB-UniRule"/>
</dbReference>
<dbReference type="GO" id="GO:0008654">
    <property type="term" value="P:phospholipid biosynthetic process"/>
    <property type="evidence" value="ECO:0007669"/>
    <property type="project" value="UniProtKB-UniRule"/>
</dbReference>
<dbReference type="HAMAP" id="MF_01043">
    <property type="entry name" value="PlsY"/>
    <property type="match status" value="1"/>
</dbReference>
<dbReference type="InterPro" id="IPR003811">
    <property type="entry name" value="G3P_acylTferase_PlsY"/>
</dbReference>
<dbReference type="NCBIfam" id="TIGR00023">
    <property type="entry name" value="glycerol-3-phosphate 1-O-acyltransferase PlsY"/>
    <property type="match status" value="1"/>
</dbReference>
<dbReference type="PANTHER" id="PTHR30309:SF0">
    <property type="entry name" value="GLYCEROL-3-PHOSPHATE ACYLTRANSFERASE-RELATED"/>
    <property type="match status" value="1"/>
</dbReference>
<dbReference type="PANTHER" id="PTHR30309">
    <property type="entry name" value="INNER MEMBRANE PROTEIN YGIH"/>
    <property type="match status" value="1"/>
</dbReference>
<dbReference type="Pfam" id="PF02660">
    <property type="entry name" value="G3P_acyltransf"/>
    <property type="match status" value="1"/>
</dbReference>
<dbReference type="SMART" id="SM01207">
    <property type="entry name" value="G3P_acyltransf"/>
    <property type="match status" value="1"/>
</dbReference>
<reference key="1">
    <citation type="journal article" date="2014" name="Stand. Genomic Sci.">
        <title>Complete genome sequence of Burkholderia phymatum STM815(T), a broad host range and efficient nitrogen-fixing symbiont of Mimosa species.</title>
        <authorList>
            <person name="Moulin L."/>
            <person name="Klonowska A."/>
            <person name="Caroline B."/>
            <person name="Booth K."/>
            <person name="Vriezen J.A."/>
            <person name="Melkonian R."/>
            <person name="James E.K."/>
            <person name="Young J.P."/>
            <person name="Bena G."/>
            <person name="Hauser L."/>
            <person name="Land M."/>
            <person name="Kyrpides N."/>
            <person name="Bruce D."/>
            <person name="Chain P."/>
            <person name="Copeland A."/>
            <person name="Pitluck S."/>
            <person name="Woyke T."/>
            <person name="Lizotte-Waniewski M."/>
            <person name="Bristow J."/>
            <person name="Riley M."/>
        </authorList>
    </citation>
    <scope>NUCLEOTIDE SEQUENCE [LARGE SCALE GENOMIC DNA]</scope>
    <source>
        <strain>DSM 17167 / CIP 108236 / LMG 21445 / STM815</strain>
    </source>
</reference>
<protein>
    <recommendedName>
        <fullName evidence="1">Glycerol-3-phosphate acyltransferase</fullName>
    </recommendedName>
    <alternativeName>
        <fullName evidence="1">Acyl-PO4 G3P acyltransferase</fullName>
    </alternativeName>
    <alternativeName>
        <fullName evidence="1">Acyl-phosphate--glycerol-3-phosphate acyltransferase</fullName>
    </alternativeName>
    <alternativeName>
        <fullName evidence="1">G3P acyltransferase</fullName>
        <shortName evidence="1">GPAT</shortName>
        <ecNumber evidence="1">2.3.1.275</ecNumber>
    </alternativeName>
    <alternativeName>
        <fullName evidence="1">Lysophosphatidic acid synthase</fullName>
        <shortName evidence="1">LPA synthase</shortName>
    </alternativeName>
</protein>